<comment type="function">
    <text evidence="2">Blocks Kv1.6/KCNA6 potassium channels.</text>
</comment>
<comment type="subcellular location">
    <subcellularLocation>
        <location evidence="5">Secreted</location>
    </subcellularLocation>
</comment>
<comment type="tissue specificity">
    <text evidence="5">Expressed by the venom gland.</text>
</comment>
<comment type="similarity">
    <text evidence="4">Belongs to the short scorpion toxin superfamily. Potassium channel inhibitor family.</text>
</comment>
<sequence>RCHFVICTTDCRRNSPGTYGECVKKEKGKECVCKS</sequence>
<keyword id="KW-1015">Disulfide bond</keyword>
<keyword id="KW-0872">Ion channel impairing toxin</keyword>
<keyword id="KW-0528">Neurotoxin</keyword>
<keyword id="KW-0632">Potassium channel impairing toxin</keyword>
<keyword id="KW-0964">Secreted</keyword>
<keyword id="KW-0800">Toxin</keyword>
<keyword id="KW-1220">Voltage-gated potassium channel impairing toxin</keyword>
<name>KAXU2_HOTTA</name>
<organism>
    <name type="scientific">Hottentotta tamulus</name>
    <name type="common">Eastern Indian scorpion</name>
    <name type="synonym">Mesobuthus tamulus</name>
    <dbReference type="NCBI Taxonomy" id="34647"/>
    <lineage>
        <taxon>Eukaryota</taxon>
        <taxon>Metazoa</taxon>
        <taxon>Ecdysozoa</taxon>
        <taxon>Arthropoda</taxon>
        <taxon>Chelicerata</taxon>
        <taxon>Arachnida</taxon>
        <taxon>Scorpiones</taxon>
        <taxon>Buthida</taxon>
        <taxon>Buthoidea</taxon>
        <taxon>Buthidae</taxon>
        <taxon>Mesobuthus</taxon>
    </lineage>
</organism>
<reference key="1">
    <citation type="journal article" date="2001" name="Arch. Biochem. Biophys.">
        <title>Tamulustoxin: a novel potassium channel blocker from the venom of the Indian red scorpion Mesobuthus tamulus.</title>
        <authorList>
            <person name="Strong P.N."/>
            <person name="Clark G.S."/>
            <person name="Armugam A."/>
            <person name="De-Allie F.A."/>
            <person name="Joseph J.S."/>
            <person name="Yemul V."/>
            <person name="Deshpande J.M."/>
            <person name="Kamat R."/>
            <person name="Gadre S.V."/>
            <person name="Gopalakrishnakone P."/>
            <person name="Kini R.M."/>
            <person name="Owen D.G."/>
            <person name="Jeyaseelan K."/>
        </authorList>
    </citation>
    <scope>NUCLEOTIDE SEQUENCE [MRNA]</scope>
</reference>
<accession>Q9BN11</accession>
<proteinExistence type="inferred from homology"/>
<feature type="peptide" id="PRO_0000044933" description="Tamulustoxin-2">
    <location>
        <begin position="1"/>
        <end position="35"/>
    </location>
</feature>
<feature type="disulfide bond" evidence="1">
    <location>
        <begin position="2"/>
        <end position="22"/>
    </location>
</feature>
<feature type="disulfide bond" evidence="1">
    <location>
        <begin position="7"/>
        <end position="31"/>
    </location>
</feature>
<feature type="disulfide bond" evidence="1">
    <location>
        <begin position="11"/>
        <end position="33"/>
    </location>
</feature>
<dbReference type="EMBL" id="AF276225">
    <property type="protein sequence ID" value="AAK01861.1"/>
    <property type="molecule type" value="mRNA"/>
</dbReference>
<dbReference type="SMR" id="Q9BN11"/>
<dbReference type="GO" id="GO:0005576">
    <property type="term" value="C:extracellular region"/>
    <property type="evidence" value="ECO:0007669"/>
    <property type="project" value="UniProtKB-SubCell"/>
</dbReference>
<dbReference type="GO" id="GO:0019870">
    <property type="term" value="F:potassium channel inhibitor activity"/>
    <property type="evidence" value="ECO:0007669"/>
    <property type="project" value="InterPro"/>
</dbReference>
<dbReference type="GO" id="GO:0090729">
    <property type="term" value="F:toxin activity"/>
    <property type="evidence" value="ECO:0007669"/>
    <property type="project" value="UniProtKB-KW"/>
</dbReference>
<dbReference type="InterPro" id="IPR012636">
    <property type="entry name" value="Toxin_32"/>
</dbReference>
<dbReference type="Pfam" id="PF08120">
    <property type="entry name" value="Toxin_32"/>
    <property type="match status" value="1"/>
</dbReference>
<protein>
    <recommendedName>
        <fullName evidence="3">Tamulustoxin-2</fullName>
        <shortName evidence="3">TmTX2</shortName>
    </recommendedName>
    <alternativeName>
        <fullName evidence="4">Potassium channel toxin alpha-KTx</fullName>
    </alternativeName>
</protein>
<evidence type="ECO:0000250" key="1"/>
<evidence type="ECO:0000250" key="2">
    <source>
        <dbReference type="UniProtKB" id="Q9BN12"/>
    </source>
</evidence>
<evidence type="ECO:0000303" key="3">
    <source>
    </source>
</evidence>
<evidence type="ECO:0000305" key="4"/>
<evidence type="ECO:0000305" key="5">
    <source>
    </source>
</evidence>